<evidence type="ECO:0000250" key="1"/>
<evidence type="ECO:0000250" key="2">
    <source>
        <dbReference type="UniProtKB" id="Q9UNQ2"/>
    </source>
</evidence>
<evidence type="ECO:0000256" key="3">
    <source>
        <dbReference type="SAM" id="MobiDB-lite"/>
    </source>
</evidence>
<evidence type="ECO:0000305" key="4"/>
<accession>Q2KHT8</accession>
<feature type="chain" id="PRO_0000248512" description="Dimethyladenosine transferase">
    <location>
        <begin position="1"/>
        <end position="313"/>
    </location>
</feature>
<feature type="region of interest" description="Disordered" evidence="3">
    <location>
        <begin position="1"/>
        <end position="22"/>
    </location>
</feature>
<feature type="binding site" evidence="1">
    <location>
        <position position="37"/>
    </location>
    <ligand>
        <name>S-adenosyl-L-methionine</name>
        <dbReference type="ChEBI" id="CHEBI:59789"/>
    </ligand>
</feature>
<feature type="binding site" evidence="1">
    <location>
        <position position="39"/>
    </location>
    <ligand>
        <name>S-adenosyl-L-methionine</name>
        <dbReference type="ChEBI" id="CHEBI:59789"/>
    </ligand>
</feature>
<feature type="binding site" evidence="1">
    <location>
        <position position="64"/>
    </location>
    <ligand>
        <name>S-adenosyl-L-methionine</name>
        <dbReference type="ChEBI" id="CHEBI:59789"/>
    </ligand>
</feature>
<feature type="binding site" evidence="1">
    <location>
        <position position="85"/>
    </location>
    <ligand>
        <name>S-adenosyl-L-methionine</name>
        <dbReference type="ChEBI" id="CHEBI:59789"/>
    </ligand>
</feature>
<feature type="binding site" evidence="1">
    <location>
        <position position="113"/>
    </location>
    <ligand>
        <name>S-adenosyl-L-methionine</name>
        <dbReference type="ChEBI" id="CHEBI:59789"/>
    </ligand>
</feature>
<feature type="binding site" evidence="1">
    <location>
        <position position="128"/>
    </location>
    <ligand>
        <name>S-adenosyl-L-methionine</name>
        <dbReference type="ChEBI" id="CHEBI:59789"/>
    </ligand>
</feature>
<gene>
    <name type="primary">DIMT1</name>
    <name type="synonym">DIMT1L</name>
</gene>
<reference key="1">
    <citation type="submission" date="2006-01" db="EMBL/GenBank/DDBJ databases">
        <authorList>
            <consortium name="NIH - Mammalian Gene Collection (MGC) project"/>
        </authorList>
    </citation>
    <scope>NUCLEOTIDE SEQUENCE [LARGE SCALE MRNA]</scope>
    <source>
        <strain>Hereford</strain>
        <tissue>Heart ventricle</tissue>
    </source>
</reference>
<comment type="function">
    <text evidence="2">Specifically dimethylates two adjacent adenosines in the loop of a conserved hairpin near the 3'-end of 18S rRNA in the 40S particle. Involved in the pre-rRNA processing steps leading to small-subunit rRNA production independently of its RNA-modifying catalytic activity. Part of the small subunit (SSU) processome, first precursor of the small eukaryotic ribosomal subunit. During the assembly of the SSU processome in the nucleolus, many ribosome biogenesis factors, an RNA chaperone and ribosomal proteins associate with the nascent pre-rRNA and work in concert to generate RNA folding, modifications, rearrangements and cleavage as well as targeted degradation of pre-ribosomal RNA by the RNA exosome.</text>
</comment>
<comment type="catalytic activity">
    <reaction evidence="2">
        <text>adenosine(1779)/adenosine(1780) in 18S rRNA + 4 S-adenosyl-L-methionine = N(6)-dimethyladenosine(1779)/N(6)-dimethyladenosine(1780) in 18S rRNA + 4 S-adenosyl-L-homocysteine + 4 H(+)</text>
        <dbReference type="Rhea" id="RHEA:42780"/>
        <dbReference type="Rhea" id="RHEA-COMP:10234"/>
        <dbReference type="Rhea" id="RHEA-COMP:10236"/>
        <dbReference type="ChEBI" id="CHEBI:15378"/>
        <dbReference type="ChEBI" id="CHEBI:57856"/>
        <dbReference type="ChEBI" id="CHEBI:59789"/>
        <dbReference type="ChEBI" id="CHEBI:74411"/>
        <dbReference type="ChEBI" id="CHEBI:74493"/>
        <dbReference type="EC" id="2.1.1.183"/>
    </reaction>
</comment>
<comment type="subunit">
    <text evidence="2">Part of the small subunit (SSU) processome, composed of more than 70 proteins and the RNA chaperone small nucleolar RNA (snoRNA) U3.</text>
</comment>
<comment type="subcellular location">
    <subcellularLocation>
        <location evidence="2">Nucleus</location>
        <location evidence="2">Nucleoplasm</location>
    </subcellularLocation>
    <subcellularLocation>
        <location evidence="2">Nucleus</location>
        <location evidence="2">Nucleolus</location>
    </subcellularLocation>
</comment>
<comment type="similarity">
    <text evidence="4">Belongs to the class I-like SAM-binding methyltransferase superfamily. rRNA adenine N(6)-methyltransferase family.</text>
</comment>
<organism>
    <name type="scientific">Bos taurus</name>
    <name type="common">Bovine</name>
    <dbReference type="NCBI Taxonomy" id="9913"/>
    <lineage>
        <taxon>Eukaryota</taxon>
        <taxon>Metazoa</taxon>
        <taxon>Chordata</taxon>
        <taxon>Craniata</taxon>
        <taxon>Vertebrata</taxon>
        <taxon>Euteleostomi</taxon>
        <taxon>Mammalia</taxon>
        <taxon>Eutheria</taxon>
        <taxon>Laurasiatheria</taxon>
        <taxon>Artiodactyla</taxon>
        <taxon>Ruminantia</taxon>
        <taxon>Pecora</taxon>
        <taxon>Bovidae</taxon>
        <taxon>Bovinae</taxon>
        <taxon>Bos</taxon>
    </lineage>
</organism>
<name>DIM1_BOVIN</name>
<protein>
    <recommendedName>
        <fullName>Dimethyladenosine transferase</fullName>
        <ecNumber evidence="2">2.1.1.183</ecNumber>
    </recommendedName>
    <alternativeName>
        <fullName>18S rRNA (adenine(1779)-N(6)/adenine(1780)-N(6))-dimethyltransferase</fullName>
    </alternativeName>
    <alternativeName>
        <fullName>18S rRNA dimethylase</fullName>
    </alternativeName>
    <alternativeName>
        <fullName>DIM1 dimethyladenosine transferase 1 homolog</fullName>
    </alternativeName>
    <alternativeName>
        <fullName>DIM1 dimethyladenosine transferase 1-like</fullName>
    </alternativeName>
    <alternativeName>
        <fullName>S-adenosylmethionine-6-N',N'-adenosyl(rRNA) dimethyltransferase</fullName>
    </alternativeName>
</protein>
<keyword id="KW-0489">Methyltransferase</keyword>
<keyword id="KW-0539">Nucleus</keyword>
<keyword id="KW-1185">Reference proteome</keyword>
<keyword id="KW-0694">RNA-binding</keyword>
<keyword id="KW-0698">rRNA processing</keyword>
<keyword id="KW-0949">S-adenosyl-L-methionine</keyword>
<keyword id="KW-0808">Transferase</keyword>
<proteinExistence type="evidence at transcript level"/>
<sequence>MPKIKSAASGRRRERQQQRGQLKSAGGLMFNTGIGQHILKNPLIVNSIIDKAALRPTDVVLEVGPGTGNMTVKLLEKAKKVIACELDPRLVAELHKRVQGTPLASKLQVMVGDVLKADLPFFDACVANLPYQISSPFVFKLLLHRPFFRCAVLMFQREFALRLVAKPGDKLYCRLSINTQLLARVDHLMKVGKNNFRPPPKVESSVVRIEPKNPPPPINFQEWDGLVRITFVRKNKTLSAAFKSSAVQQLLEKNYRIHCSVHNIIIPEDFSIADKIQQILTSTGFSDKRARSMDIDDFIRLLHGFNAEGIHFS</sequence>
<dbReference type="EC" id="2.1.1.183" evidence="2"/>
<dbReference type="EMBL" id="BC112886">
    <property type="protein sequence ID" value="AAI12887.1"/>
    <property type="molecule type" value="mRNA"/>
</dbReference>
<dbReference type="RefSeq" id="NP_001039501.1">
    <property type="nucleotide sequence ID" value="NM_001046036.2"/>
</dbReference>
<dbReference type="SMR" id="Q2KHT8"/>
<dbReference type="FunCoup" id="Q2KHT8">
    <property type="interactions" value="2554"/>
</dbReference>
<dbReference type="STRING" id="9913.ENSBTAP00000015680"/>
<dbReference type="PaxDb" id="9913-ENSBTAP00000015680"/>
<dbReference type="GeneID" id="509725"/>
<dbReference type="KEGG" id="bta:509725"/>
<dbReference type="CTD" id="27292"/>
<dbReference type="VEuPathDB" id="HostDB:ENSBTAG00000011812"/>
<dbReference type="eggNOG" id="KOG0820">
    <property type="taxonomic scope" value="Eukaryota"/>
</dbReference>
<dbReference type="HOGENOM" id="CLU_041220_2_3_1"/>
<dbReference type="InParanoid" id="Q2KHT8"/>
<dbReference type="OMA" id="GMFQKEV"/>
<dbReference type="OrthoDB" id="74991at2759"/>
<dbReference type="TreeFam" id="TF354255"/>
<dbReference type="CD-CODE" id="D7FE2080">
    <property type="entry name" value="Nucleolus"/>
</dbReference>
<dbReference type="Proteomes" id="UP000009136">
    <property type="component" value="Chromosome 20"/>
</dbReference>
<dbReference type="Bgee" id="ENSBTAG00000011812">
    <property type="expression patterns" value="Expressed in oocyte and 106 other cell types or tissues"/>
</dbReference>
<dbReference type="GO" id="GO:0005730">
    <property type="term" value="C:nucleolus"/>
    <property type="evidence" value="ECO:0000250"/>
    <property type="project" value="UniProtKB"/>
</dbReference>
<dbReference type="GO" id="GO:0005654">
    <property type="term" value="C:nucleoplasm"/>
    <property type="evidence" value="ECO:0007669"/>
    <property type="project" value="UniProtKB-SubCell"/>
</dbReference>
<dbReference type="GO" id="GO:0032040">
    <property type="term" value="C:small-subunit processome"/>
    <property type="evidence" value="ECO:0000250"/>
    <property type="project" value="UniProtKB"/>
</dbReference>
<dbReference type="GO" id="GO:0052909">
    <property type="term" value="F:18S rRNA (adenine(1779)-N(6)/adenine(1780)-N(6))-dimethyltransferase activity"/>
    <property type="evidence" value="ECO:0000250"/>
    <property type="project" value="UniProtKB"/>
</dbReference>
<dbReference type="GO" id="GO:0003723">
    <property type="term" value="F:RNA binding"/>
    <property type="evidence" value="ECO:0007669"/>
    <property type="project" value="UniProtKB-KW"/>
</dbReference>
<dbReference type="GO" id="GO:0000179">
    <property type="term" value="F:rRNA (adenine-N6,N6-)-dimethyltransferase activity"/>
    <property type="evidence" value="ECO:0000318"/>
    <property type="project" value="GO_Central"/>
</dbReference>
<dbReference type="GO" id="GO:2000234">
    <property type="term" value="P:positive regulation of rRNA processing"/>
    <property type="evidence" value="ECO:0000250"/>
    <property type="project" value="UniProtKB"/>
</dbReference>
<dbReference type="GO" id="GO:0042274">
    <property type="term" value="P:ribosomal small subunit biogenesis"/>
    <property type="evidence" value="ECO:0000250"/>
    <property type="project" value="UniProtKB"/>
</dbReference>
<dbReference type="GO" id="GO:0031167">
    <property type="term" value="P:rRNA methylation"/>
    <property type="evidence" value="ECO:0000250"/>
    <property type="project" value="UniProtKB"/>
</dbReference>
<dbReference type="CDD" id="cd02440">
    <property type="entry name" value="AdoMet_MTases"/>
    <property type="match status" value="1"/>
</dbReference>
<dbReference type="FunFam" id="1.10.8.480:FF:000001">
    <property type="entry name" value="rRNA adenine N(6)-methyltransferase"/>
    <property type="match status" value="1"/>
</dbReference>
<dbReference type="FunFam" id="3.40.50.150:FF:000007">
    <property type="entry name" value="rRNA adenine N(6)-methyltransferase"/>
    <property type="match status" value="1"/>
</dbReference>
<dbReference type="Gene3D" id="1.10.8.480">
    <property type="match status" value="1"/>
</dbReference>
<dbReference type="Gene3D" id="3.40.50.150">
    <property type="entry name" value="Vaccinia Virus protein VP39"/>
    <property type="match status" value="1"/>
</dbReference>
<dbReference type="HAMAP" id="MF_00607">
    <property type="entry name" value="16SrRNA_methyltr_A"/>
    <property type="match status" value="1"/>
</dbReference>
<dbReference type="InterPro" id="IPR001737">
    <property type="entry name" value="KsgA/Erm"/>
</dbReference>
<dbReference type="InterPro" id="IPR020596">
    <property type="entry name" value="rRNA_Ade_Mease_Trfase_CS"/>
</dbReference>
<dbReference type="InterPro" id="IPR020598">
    <property type="entry name" value="rRNA_Ade_methylase_Trfase_N"/>
</dbReference>
<dbReference type="InterPro" id="IPR011530">
    <property type="entry name" value="rRNA_adenine_dimethylase"/>
</dbReference>
<dbReference type="InterPro" id="IPR029063">
    <property type="entry name" value="SAM-dependent_MTases_sf"/>
</dbReference>
<dbReference type="NCBIfam" id="TIGR00755">
    <property type="entry name" value="ksgA"/>
    <property type="match status" value="1"/>
</dbReference>
<dbReference type="PANTHER" id="PTHR11727">
    <property type="entry name" value="DIMETHYLADENOSINE TRANSFERASE"/>
    <property type="match status" value="1"/>
</dbReference>
<dbReference type="PANTHER" id="PTHR11727:SF7">
    <property type="entry name" value="DIMETHYLADENOSINE TRANSFERASE-RELATED"/>
    <property type="match status" value="1"/>
</dbReference>
<dbReference type="Pfam" id="PF00398">
    <property type="entry name" value="RrnaAD"/>
    <property type="match status" value="1"/>
</dbReference>
<dbReference type="SMART" id="SM00650">
    <property type="entry name" value="rADc"/>
    <property type="match status" value="1"/>
</dbReference>
<dbReference type="SUPFAM" id="SSF53335">
    <property type="entry name" value="S-adenosyl-L-methionine-dependent methyltransferases"/>
    <property type="match status" value="1"/>
</dbReference>
<dbReference type="PROSITE" id="PS01131">
    <property type="entry name" value="RRNA_A_DIMETH"/>
    <property type="match status" value="1"/>
</dbReference>
<dbReference type="PROSITE" id="PS51689">
    <property type="entry name" value="SAM_RNA_A_N6_MT"/>
    <property type="match status" value="1"/>
</dbReference>